<gene>
    <name evidence="1" type="primary">ppnP</name>
    <name type="ordered locus">PSPTO_2022</name>
</gene>
<proteinExistence type="inferred from homology"/>
<protein>
    <recommendedName>
        <fullName evidence="1">Pyrimidine/purine nucleoside phosphorylase</fullName>
        <ecNumber evidence="1">2.4.2.1</ecNumber>
        <ecNumber evidence="1">2.4.2.2</ecNumber>
    </recommendedName>
    <alternativeName>
        <fullName evidence="1">Adenosine phosphorylase</fullName>
    </alternativeName>
    <alternativeName>
        <fullName evidence="1">Cytidine phosphorylase</fullName>
    </alternativeName>
    <alternativeName>
        <fullName evidence="1">Guanosine phosphorylase</fullName>
    </alternativeName>
    <alternativeName>
        <fullName evidence="1">Inosine phosphorylase</fullName>
    </alternativeName>
    <alternativeName>
        <fullName evidence="1">Thymidine phosphorylase</fullName>
    </alternativeName>
    <alternativeName>
        <fullName evidence="1">Uridine phosphorylase</fullName>
    </alternativeName>
    <alternativeName>
        <fullName evidence="1">Xanthosine phosphorylase</fullName>
    </alternativeName>
</protein>
<reference key="1">
    <citation type="journal article" date="2003" name="Proc. Natl. Acad. Sci. U.S.A.">
        <title>The complete genome sequence of the Arabidopsis and tomato pathogen Pseudomonas syringae pv. tomato DC3000.</title>
        <authorList>
            <person name="Buell C.R."/>
            <person name="Joardar V."/>
            <person name="Lindeberg M."/>
            <person name="Selengut J."/>
            <person name="Paulsen I.T."/>
            <person name="Gwinn M.L."/>
            <person name="Dodson R.J."/>
            <person name="DeBoy R.T."/>
            <person name="Durkin A.S."/>
            <person name="Kolonay J.F."/>
            <person name="Madupu R."/>
            <person name="Daugherty S.C."/>
            <person name="Brinkac L.M."/>
            <person name="Beanan M.J."/>
            <person name="Haft D.H."/>
            <person name="Nelson W.C."/>
            <person name="Davidsen T.M."/>
            <person name="Zafar N."/>
            <person name="Zhou L."/>
            <person name="Liu J."/>
            <person name="Yuan Q."/>
            <person name="Khouri H.M."/>
            <person name="Fedorova N.B."/>
            <person name="Tran B."/>
            <person name="Russell D."/>
            <person name="Berry K.J."/>
            <person name="Utterback T.R."/>
            <person name="Van Aken S.E."/>
            <person name="Feldblyum T.V."/>
            <person name="D'Ascenzo M."/>
            <person name="Deng W.-L."/>
            <person name="Ramos A.R."/>
            <person name="Alfano J.R."/>
            <person name="Cartinhour S."/>
            <person name="Chatterjee A.K."/>
            <person name="Delaney T.P."/>
            <person name="Lazarowitz S.G."/>
            <person name="Martin G.B."/>
            <person name="Schneider D.J."/>
            <person name="Tang X."/>
            <person name="Bender C.L."/>
            <person name="White O."/>
            <person name="Fraser C.M."/>
            <person name="Collmer A."/>
        </authorList>
    </citation>
    <scope>NUCLEOTIDE SEQUENCE [LARGE SCALE GENOMIC DNA]</scope>
    <source>
        <strain>ATCC BAA-871 / DC3000</strain>
    </source>
</reference>
<evidence type="ECO:0000255" key="1">
    <source>
        <dbReference type="HAMAP-Rule" id="MF_01537"/>
    </source>
</evidence>
<dbReference type="EC" id="2.4.2.1" evidence="1"/>
<dbReference type="EC" id="2.4.2.2" evidence="1"/>
<dbReference type="EMBL" id="AE016853">
    <property type="protein sequence ID" value="AAO55540.1"/>
    <property type="molecule type" value="Genomic_DNA"/>
</dbReference>
<dbReference type="RefSeq" id="NP_791845.1">
    <property type="nucleotide sequence ID" value="NC_004578.1"/>
</dbReference>
<dbReference type="RefSeq" id="WP_003378666.1">
    <property type="nucleotide sequence ID" value="NC_004578.1"/>
</dbReference>
<dbReference type="SMR" id="Q884R6"/>
<dbReference type="STRING" id="223283.PSPTO_2022"/>
<dbReference type="KEGG" id="pst:PSPTO_2022"/>
<dbReference type="PATRIC" id="fig|223283.9.peg.2053"/>
<dbReference type="eggNOG" id="COG3123">
    <property type="taxonomic scope" value="Bacteria"/>
</dbReference>
<dbReference type="HOGENOM" id="CLU_157874_0_0_6"/>
<dbReference type="OrthoDB" id="9793848at2"/>
<dbReference type="PhylomeDB" id="Q884R6"/>
<dbReference type="Proteomes" id="UP000002515">
    <property type="component" value="Chromosome"/>
</dbReference>
<dbReference type="GO" id="GO:0005829">
    <property type="term" value="C:cytosol"/>
    <property type="evidence" value="ECO:0007669"/>
    <property type="project" value="TreeGrafter"/>
</dbReference>
<dbReference type="GO" id="GO:0047975">
    <property type="term" value="F:guanosine phosphorylase activity"/>
    <property type="evidence" value="ECO:0007669"/>
    <property type="project" value="UniProtKB-EC"/>
</dbReference>
<dbReference type="GO" id="GO:0004731">
    <property type="term" value="F:purine-nucleoside phosphorylase activity"/>
    <property type="evidence" value="ECO:0007669"/>
    <property type="project" value="UniProtKB-UniRule"/>
</dbReference>
<dbReference type="GO" id="GO:0009032">
    <property type="term" value="F:thymidine phosphorylase activity"/>
    <property type="evidence" value="ECO:0007669"/>
    <property type="project" value="UniProtKB-EC"/>
</dbReference>
<dbReference type="GO" id="GO:0004850">
    <property type="term" value="F:uridine phosphorylase activity"/>
    <property type="evidence" value="ECO:0007669"/>
    <property type="project" value="UniProtKB-EC"/>
</dbReference>
<dbReference type="CDD" id="cd20296">
    <property type="entry name" value="cupin_PpnP-like"/>
    <property type="match status" value="1"/>
</dbReference>
<dbReference type="FunFam" id="2.60.120.10:FF:000016">
    <property type="entry name" value="Pyrimidine/purine nucleoside phosphorylase"/>
    <property type="match status" value="1"/>
</dbReference>
<dbReference type="Gene3D" id="2.60.120.10">
    <property type="entry name" value="Jelly Rolls"/>
    <property type="match status" value="1"/>
</dbReference>
<dbReference type="HAMAP" id="MF_01537">
    <property type="entry name" value="Nucleos_phosphorylase_PpnP"/>
    <property type="match status" value="1"/>
</dbReference>
<dbReference type="InterPro" id="IPR009664">
    <property type="entry name" value="Ppnp"/>
</dbReference>
<dbReference type="InterPro" id="IPR014710">
    <property type="entry name" value="RmlC-like_jellyroll"/>
</dbReference>
<dbReference type="InterPro" id="IPR011051">
    <property type="entry name" value="RmlC_Cupin_sf"/>
</dbReference>
<dbReference type="PANTHER" id="PTHR36540">
    <property type="entry name" value="PYRIMIDINE/PURINE NUCLEOSIDE PHOSPHORYLASE"/>
    <property type="match status" value="1"/>
</dbReference>
<dbReference type="PANTHER" id="PTHR36540:SF1">
    <property type="entry name" value="PYRIMIDINE_PURINE NUCLEOSIDE PHOSPHORYLASE"/>
    <property type="match status" value="1"/>
</dbReference>
<dbReference type="Pfam" id="PF06865">
    <property type="entry name" value="Ppnp"/>
    <property type="match status" value="1"/>
</dbReference>
<dbReference type="SUPFAM" id="SSF51182">
    <property type="entry name" value="RmlC-like cupins"/>
    <property type="match status" value="1"/>
</dbReference>
<sequence>MFKVNEYFDGTVKSIAFSQAEGQATIGVMAAGEYEFGTAQREIMHVISGELNVKLPDSTDWETFSTGSQFNVPANSKFQLKVSVDTAYLCEYR</sequence>
<accession>Q884R6</accession>
<name>PPNP_PSESM</name>
<comment type="function">
    <text evidence="1">Catalyzes the phosphorolysis of diverse nucleosides, yielding D-ribose 1-phosphate and the respective free bases. Can use uridine, adenosine, guanosine, cytidine, thymidine, inosine and xanthosine as substrates. Also catalyzes the reverse reactions.</text>
</comment>
<comment type="catalytic activity">
    <reaction evidence="1">
        <text>a purine D-ribonucleoside + phosphate = a purine nucleobase + alpha-D-ribose 1-phosphate</text>
        <dbReference type="Rhea" id="RHEA:19805"/>
        <dbReference type="ChEBI" id="CHEBI:26386"/>
        <dbReference type="ChEBI" id="CHEBI:43474"/>
        <dbReference type="ChEBI" id="CHEBI:57720"/>
        <dbReference type="ChEBI" id="CHEBI:142355"/>
        <dbReference type="EC" id="2.4.2.1"/>
    </reaction>
</comment>
<comment type="catalytic activity">
    <reaction evidence="1">
        <text>adenosine + phosphate = alpha-D-ribose 1-phosphate + adenine</text>
        <dbReference type="Rhea" id="RHEA:27642"/>
        <dbReference type="ChEBI" id="CHEBI:16335"/>
        <dbReference type="ChEBI" id="CHEBI:16708"/>
        <dbReference type="ChEBI" id="CHEBI:43474"/>
        <dbReference type="ChEBI" id="CHEBI:57720"/>
        <dbReference type="EC" id="2.4.2.1"/>
    </reaction>
</comment>
<comment type="catalytic activity">
    <reaction evidence="1">
        <text>cytidine + phosphate = cytosine + alpha-D-ribose 1-phosphate</text>
        <dbReference type="Rhea" id="RHEA:52540"/>
        <dbReference type="ChEBI" id="CHEBI:16040"/>
        <dbReference type="ChEBI" id="CHEBI:17562"/>
        <dbReference type="ChEBI" id="CHEBI:43474"/>
        <dbReference type="ChEBI" id="CHEBI:57720"/>
        <dbReference type="EC" id="2.4.2.2"/>
    </reaction>
</comment>
<comment type="catalytic activity">
    <reaction evidence="1">
        <text>guanosine + phosphate = alpha-D-ribose 1-phosphate + guanine</text>
        <dbReference type="Rhea" id="RHEA:13233"/>
        <dbReference type="ChEBI" id="CHEBI:16235"/>
        <dbReference type="ChEBI" id="CHEBI:16750"/>
        <dbReference type="ChEBI" id="CHEBI:43474"/>
        <dbReference type="ChEBI" id="CHEBI:57720"/>
        <dbReference type="EC" id="2.4.2.1"/>
    </reaction>
</comment>
<comment type="catalytic activity">
    <reaction evidence="1">
        <text>inosine + phosphate = alpha-D-ribose 1-phosphate + hypoxanthine</text>
        <dbReference type="Rhea" id="RHEA:27646"/>
        <dbReference type="ChEBI" id="CHEBI:17368"/>
        <dbReference type="ChEBI" id="CHEBI:17596"/>
        <dbReference type="ChEBI" id="CHEBI:43474"/>
        <dbReference type="ChEBI" id="CHEBI:57720"/>
        <dbReference type="EC" id="2.4.2.1"/>
    </reaction>
</comment>
<comment type="catalytic activity">
    <reaction evidence="1">
        <text>thymidine + phosphate = 2-deoxy-alpha-D-ribose 1-phosphate + thymine</text>
        <dbReference type="Rhea" id="RHEA:16037"/>
        <dbReference type="ChEBI" id="CHEBI:17748"/>
        <dbReference type="ChEBI" id="CHEBI:17821"/>
        <dbReference type="ChEBI" id="CHEBI:43474"/>
        <dbReference type="ChEBI" id="CHEBI:57259"/>
        <dbReference type="EC" id="2.4.2.2"/>
    </reaction>
</comment>
<comment type="catalytic activity">
    <reaction evidence="1">
        <text>uridine + phosphate = alpha-D-ribose 1-phosphate + uracil</text>
        <dbReference type="Rhea" id="RHEA:24388"/>
        <dbReference type="ChEBI" id="CHEBI:16704"/>
        <dbReference type="ChEBI" id="CHEBI:17568"/>
        <dbReference type="ChEBI" id="CHEBI:43474"/>
        <dbReference type="ChEBI" id="CHEBI:57720"/>
        <dbReference type="EC" id="2.4.2.2"/>
    </reaction>
</comment>
<comment type="catalytic activity">
    <reaction evidence="1">
        <text>xanthosine + phosphate = alpha-D-ribose 1-phosphate + xanthine</text>
        <dbReference type="Rhea" id="RHEA:27638"/>
        <dbReference type="ChEBI" id="CHEBI:17712"/>
        <dbReference type="ChEBI" id="CHEBI:18107"/>
        <dbReference type="ChEBI" id="CHEBI:43474"/>
        <dbReference type="ChEBI" id="CHEBI:57720"/>
        <dbReference type="EC" id="2.4.2.1"/>
    </reaction>
</comment>
<comment type="similarity">
    <text evidence="1">Belongs to the nucleoside phosphorylase PpnP family.</text>
</comment>
<organism>
    <name type="scientific">Pseudomonas syringae pv. tomato (strain ATCC BAA-871 / DC3000)</name>
    <dbReference type="NCBI Taxonomy" id="223283"/>
    <lineage>
        <taxon>Bacteria</taxon>
        <taxon>Pseudomonadati</taxon>
        <taxon>Pseudomonadota</taxon>
        <taxon>Gammaproteobacteria</taxon>
        <taxon>Pseudomonadales</taxon>
        <taxon>Pseudomonadaceae</taxon>
        <taxon>Pseudomonas</taxon>
    </lineage>
</organism>
<feature type="chain" id="PRO_0000211775" description="Pyrimidine/purine nucleoside phosphorylase">
    <location>
        <begin position="1"/>
        <end position="93"/>
    </location>
</feature>
<keyword id="KW-0328">Glycosyltransferase</keyword>
<keyword id="KW-1185">Reference proteome</keyword>
<keyword id="KW-0808">Transferase</keyword>